<reference key="1">
    <citation type="journal article" date="2004" name="Genome Res.">
        <title>The status, quality, and expansion of the NIH full-length cDNA project: the Mammalian Gene Collection (MGC).</title>
        <authorList>
            <consortium name="The MGC Project Team"/>
        </authorList>
    </citation>
    <scope>NUCLEOTIDE SEQUENCE [LARGE SCALE MRNA]</scope>
    <source>
        <tissue>Brain</tissue>
    </source>
</reference>
<comment type="function">
    <text evidence="3">Catalytic subunit of a polyglutamylase complex which modifies tubulin, generating side chains of glutamate on the gamma-carboxyl group of specific glutamate residues within the C-terminal tail of tubulin. Probably involved in the side-chain elongation step of the polyglutamylation reaction rather than the initiation step. Modifies both alpha- and beta-tubulins with a preference for the alpha-tail. Unlike most polyglutamylases of the tubulin--tyrosine ligase family, only displays a catalytic activity when in complex with other proteins as it is most likely lacking domains important for autonomous activity. Part of the neuronal tubulin polyglutamylase complex. Mediates cilia and flagella polyglutamylation which is essential for their biogenesis and motility. Involved in respiratory motile cilia function through the regulation of beating asymmetry. Essential for sperm flagella biogenesis, motility and male fertility. Involved in KLF4 glutamylation which impedes its ubiquitination, thereby leading to somatic cell reprogramming, pluripotency maintenance and embryogenesis.</text>
</comment>
<comment type="catalytic activity">
    <reaction evidence="3">
        <text>(L-glutamyl)(n)-gamma-L-glutamyl-L-glutamyl-[protein] + L-glutamate + ATP = (L-glutamyl)(n+1)-gamma-L-glutamyl-L-glutamyl-[protein] + ADP + phosphate + H(+)</text>
        <dbReference type="Rhea" id="RHEA:60148"/>
        <dbReference type="Rhea" id="RHEA-COMP:15519"/>
        <dbReference type="Rhea" id="RHEA-COMP:15675"/>
        <dbReference type="ChEBI" id="CHEBI:15378"/>
        <dbReference type="ChEBI" id="CHEBI:29985"/>
        <dbReference type="ChEBI" id="CHEBI:30616"/>
        <dbReference type="ChEBI" id="CHEBI:43474"/>
        <dbReference type="ChEBI" id="CHEBI:143623"/>
        <dbReference type="ChEBI" id="CHEBI:456216"/>
    </reaction>
    <physiologicalReaction direction="left-to-right" evidence="3">
        <dbReference type="Rhea" id="RHEA:60149"/>
    </physiologicalReaction>
</comment>
<comment type="cofactor">
    <cofactor evidence="1">
        <name>Mg(2+)</name>
        <dbReference type="ChEBI" id="CHEBI:18420"/>
    </cofactor>
</comment>
<comment type="subunit">
    <text evidence="2 3">Part of the neuronal tubulin polyglutamylase complex which contains TPGS1, TPGS2, TTLL1, LRRC49 and NICN1. Interacts with PCM1, CSTPP1 and LRRC49.</text>
</comment>
<comment type="subcellular location">
    <subcellularLocation>
        <location evidence="3">Cytoplasm</location>
        <location evidence="3">Cytoskeleton</location>
    </subcellularLocation>
    <subcellularLocation>
        <location evidence="3">Cytoplasm</location>
        <location evidence="3">Cytoskeleton</location>
        <location evidence="3">Cilium basal body</location>
    </subcellularLocation>
    <subcellularLocation>
        <location evidence="3">Cytoplasm</location>
        <location evidence="3">Cytoskeleton</location>
        <location evidence="3">Cilium axoneme</location>
    </subcellularLocation>
    <subcellularLocation>
        <location evidence="3">Cell projection</location>
        <location evidence="3">Cilium</location>
        <location evidence="3">Flagellum</location>
    </subcellularLocation>
</comment>
<comment type="domain">
    <text evidence="1">Gln-144 is the main determinant for regioselectivity, which segregates between initiases and elongases in all tubulin--tyrosine ligase family. A glutamine residue at this position is found in elongases TTLL6, TTLL9, TTLL11, TTLL13, TTLL10 and favors glutamate-chain elongation, whereas an arginine residue is found in initiases TTLL2, TTLL4, TTLL5, TTLL3, TTLL8 and favors initiation.</text>
</comment>
<comment type="similarity">
    <text evidence="6">Belongs to the tubulin polyglutamylase family.</text>
</comment>
<keyword id="KW-0067">ATP-binding</keyword>
<keyword id="KW-0966">Cell projection</keyword>
<keyword id="KW-0969">Cilium</keyword>
<keyword id="KW-0963">Cytoplasm</keyword>
<keyword id="KW-0206">Cytoskeleton</keyword>
<keyword id="KW-0282">Flagellum</keyword>
<keyword id="KW-0436">Ligase</keyword>
<keyword id="KW-0460">Magnesium</keyword>
<keyword id="KW-0479">Metal-binding</keyword>
<keyword id="KW-0493">Microtubule</keyword>
<keyword id="KW-0547">Nucleotide-binding</keyword>
<keyword id="KW-1185">Reference proteome</keyword>
<evidence type="ECO:0000250" key="1">
    <source>
        <dbReference type="UniProtKB" id="A4Q9E8"/>
    </source>
</evidence>
<evidence type="ECO:0000250" key="2">
    <source>
        <dbReference type="UniProtKB" id="O95922"/>
    </source>
</evidence>
<evidence type="ECO:0000250" key="3">
    <source>
        <dbReference type="UniProtKB" id="Q91V51"/>
    </source>
</evidence>
<evidence type="ECO:0000255" key="4">
    <source>
        <dbReference type="PROSITE-ProRule" id="PRU00568"/>
    </source>
</evidence>
<evidence type="ECO:0000256" key="5">
    <source>
        <dbReference type="SAM" id="MobiDB-lite"/>
    </source>
</evidence>
<evidence type="ECO:0000305" key="6"/>
<feature type="chain" id="PRO_0000249318" description="Polyglutamylase complex subunit TTLL1">
    <location>
        <begin position="1"/>
        <end position="423"/>
    </location>
</feature>
<feature type="domain" description="TTL" evidence="4">
    <location>
        <begin position="1"/>
        <end position="367"/>
    </location>
</feature>
<feature type="region of interest" description="Disordered" evidence="5">
    <location>
        <begin position="390"/>
        <end position="423"/>
    </location>
</feature>
<feature type="binding site" evidence="1">
    <location>
        <position position="138"/>
    </location>
    <ligand>
        <name>ATP</name>
        <dbReference type="ChEBI" id="CHEBI:30616"/>
    </ligand>
</feature>
<feature type="binding site" evidence="1">
    <location>
        <begin position="144"/>
        <end position="145"/>
    </location>
    <ligand>
        <name>ATP</name>
        <dbReference type="ChEBI" id="CHEBI:30616"/>
    </ligand>
</feature>
<feature type="binding site" evidence="1">
    <location>
        <position position="144"/>
    </location>
    <ligand>
        <name>a protein</name>
        <dbReference type="ChEBI" id="CHEBI:16541"/>
    </ligand>
    <ligandPart>
        <name>L-glutamate residue</name>
        <dbReference type="ChEBI" id="CHEBI:29973"/>
        <note>L-glutamate acceptor residue in protein target</note>
    </ligandPart>
</feature>
<feature type="binding site" evidence="1">
    <location>
        <begin position="181"/>
        <end position="184"/>
    </location>
    <ligand>
        <name>ATP</name>
        <dbReference type="ChEBI" id="CHEBI:30616"/>
    </ligand>
</feature>
<feature type="binding site" evidence="1">
    <location>
        <begin position="194"/>
        <end position="196"/>
    </location>
    <ligand>
        <name>ATP</name>
        <dbReference type="ChEBI" id="CHEBI:30616"/>
    </ligand>
</feature>
<feature type="binding site" evidence="1">
    <location>
        <position position="220"/>
    </location>
    <ligand>
        <name>L-glutamate</name>
        <dbReference type="ChEBI" id="CHEBI:29985"/>
    </ligand>
</feature>
<feature type="binding site" evidence="1">
    <location>
        <begin position="241"/>
        <end position="242"/>
    </location>
    <ligand>
        <name>ATP</name>
        <dbReference type="ChEBI" id="CHEBI:30616"/>
    </ligand>
</feature>
<feature type="binding site" evidence="1">
    <location>
        <position position="259"/>
    </location>
    <ligand>
        <name>L-glutamate</name>
        <dbReference type="ChEBI" id="CHEBI:29985"/>
    </ligand>
</feature>
<feature type="binding site" evidence="1">
    <location>
        <position position="313"/>
    </location>
    <ligand>
        <name>Mg(2+)</name>
        <dbReference type="ChEBI" id="CHEBI:18420"/>
        <label>1</label>
    </ligand>
</feature>
<feature type="binding site" evidence="1">
    <location>
        <position position="326"/>
    </location>
    <ligand>
        <name>Mg(2+)</name>
        <dbReference type="ChEBI" id="CHEBI:18420"/>
        <label>1</label>
    </ligand>
</feature>
<feature type="binding site" evidence="1">
    <location>
        <position position="326"/>
    </location>
    <ligand>
        <name>Mg(2+)</name>
        <dbReference type="ChEBI" id="CHEBI:18420"/>
        <label>2</label>
    </ligand>
</feature>
<feature type="binding site" evidence="1">
    <location>
        <position position="328"/>
    </location>
    <ligand>
        <name>Mg(2+)</name>
        <dbReference type="ChEBI" id="CHEBI:18420"/>
        <label>2</label>
    </ligand>
</feature>
<feature type="binding site" evidence="1">
    <location>
        <position position="344"/>
    </location>
    <ligand>
        <name>L-glutamate</name>
        <dbReference type="ChEBI" id="CHEBI:29985"/>
    </ligand>
</feature>
<feature type="site" description="Essential for specifying alpha-elongation versus initiation step of the polyglutamylase activity" evidence="1">
    <location>
        <position position="144"/>
    </location>
</feature>
<accession>Q5PPI9</accession>
<protein>
    <recommendedName>
        <fullName evidence="3">Polyglutamylase complex subunit TTLL1</fullName>
        <ecNumber evidence="3">6.3.2.-</ecNumber>
    </recommendedName>
    <alternativeName>
        <fullName>Tubulin polyglutamylase TTLL1</fullName>
    </alternativeName>
    <alternativeName>
        <fullName evidence="3">Tubulin polyglutamylase complex subunit 3</fullName>
        <shortName evidence="3">PGs3</shortName>
    </alternativeName>
    <alternativeName>
        <fullName evidence="3">Tubulin--tyrosine ligase-like protein 1</fullName>
    </alternativeName>
</protein>
<dbReference type="EC" id="6.3.2.-" evidence="3"/>
<dbReference type="EMBL" id="BC087669">
    <property type="protein sequence ID" value="AAH87669.1"/>
    <property type="molecule type" value="mRNA"/>
</dbReference>
<dbReference type="RefSeq" id="NP_001012200.1">
    <property type="nucleotide sequence ID" value="NM_001012200.2"/>
</dbReference>
<dbReference type="RefSeq" id="NP_001380786.1">
    <property type="nucleotide sequence ID" value="NM_001393857.1"/>
</dbReference>
<dbReference type="RefSeq" id="XP_006242166.1">
    <property type="nucleotide sequence ID" value="XM_006242104.3"/>
</dbReference>
<dbReference type="RefSeq" id="XP_017450480.1">
    <property type="nucleotide sequence ID" value="XM_017594991.1"/>
</dbReference>
<dbReference type="RefSeq" id="XP_063120004.1">
    <property type="nucleotide sequence ID" value="XM_063263934.1"/>
</dbReference>
<dbReference type="RefSeq" id="XP_063120005.1">
    <property type="nucleotide sequence ID" value="XM_063263935.1"/>
</dbReference>
<dbReference type="SMR" id="Q5PPI9"/>
<dbReference type="BioGRID" id="263866">
    <property type="interactions" value="1"/>
</dbReference>
<dbReference type="FunCoup" id="Q5PPI9">
    <property type="interactions" value="949"/>
</dbReference>
<dbReference type="STRING" id="10116.ENSRNOP00000052832"/>
<dbReference type="PhosphoSitePlus" id="Q5PPI9"/>
<dbReference type="PaxDb" id="10116-ENSRNOP00000052832"/>
<dbReference type="Ensembl" id="ENSRNOT00000055978.5">
    <property type="protein sequence ID" value="ENSRNOP00000052832.3"/>
    <property type="gene ID" value="ENSRNOG00000010141.8"/>
</dbReference>
<dbReference type="GeneID" id="362969"/>
<dbReference type="KEGG" id="rno:362969"/>
<dbReference type="AGR" id="RGD:1309124"/>
<dbReference type="CTD" id="25809"/>
<dbReference type="RGD" id="1309124">
    <property type="gene designation" value="Ttll1"/>
</dbReference>
<dbReference type="eggNOG" id="KOG2157">
    <property type="taxonomic scope" value="Eukaryota"/>
</dbReference>
<dbReference type="GeneTree" id="ENSGT00940000156720"/>
<dbReference type="HOGENOM" id="CLU_010131_0_0_1"/>
<dbReference type="InParanoid" id="Q5PPI9"/>
<dbReference type="OMA" id="DWNFYWS"/>
<dbReference type="PhylomeDB" id="Q5PPI9"/>
<dbReference type="PRO" id="PR:Q5PPI9"/>
<dbReference type="Proteomes" id="UP000002494">
    <property type="component" value="Chromosome 7"/>
</dbReference>
<dbReference type="Bgee" id="ENSRNOG00000010141">
    <property type="expression patterns" value="Expressed in frontal cortex and 19 other cell types or tissues"/>
</dbReference>
<dbReference type="GO" id="GO:0036064">
    <property type="term" value="C:ciliary basal body"/>
    <property type="evidence" value="ECO:0000266"/>
    <property type="project" value="RGD"/>
</dbReference>
<dbReference type="GO" id="GO:0005737">
    <property type="term" value="C:cytoplasm"/>
    <property type="evidence" value="ECO:0007669"/>
    <property type="project" value="UniProtKB-KW"/>
</dbReference>
<dbReference type="GO" id="GO:0005576">
    <property type="term" value="C:extracellular region"/>
    <property type="evidence" value="ECO:0007669"/>
    <property type="project" value="GOC"/>
</dbReference>
<dbReference type="GO" id="GO:0005874">
    <property type="term" value="C:microtubule"/>
    <property type="evidence" value="ECO:0000266"/>
    <property type="project" value="RGD"/>
</dbReference>
<dbReference type="GO" id="GO:0031514">
    <property type="term" value="C:motile cilium"/>
    <property type="evidence" value="ECO:0007669"/>
    <property type="project" value="UniProtKB-SubCell"/>
</dbReference>
<dbReference type="GO" id="GO:0005524">
    <property type="term" value="F:ATP binding"/>
    <property type="evidence" value="ECO:0007669"/>
    <property type="project" value="UniProtKB-KW"/>
</dbReference>
<dbReference type="GO" id="GO:0046872">
    <property type="term" value="F:metal ion binding"/>
    <property type="evidence" value="ECO:0007669"/>
    <property type="project" value="UniProtKB-KW"/>
</dbReference>
<dbReference type="GO" id="GO:0106438">
    <property type="term" value="F:protein-glutamic acid ligase activity, elongating"/>
    <property type="evidence" value="ECO:0007669"/>
    <property type="project" value="RHEA"/>
</dbReference>
<dbReference type="GO" id="GO:0015631">
    <property type="term" value="F:tubulin binding"/>
    <property type="evidence" value="ECO:0000318"/>
    <property type="project" value="GO_Central"/>
</dbReference>
<dbReference type="GO" id="GO:0070740">
    <property type="term" value="F:tubulin-glutamic acid ligase activity"/>
    <property type="evidence" value="ECO:0000266"/>
    <property type="project" value="RGD"/>
</dbReference>
<dbReference type="GO" id="GO:0035082">
    <property type="term" value="P:axoneme assembly"/>
    <property type="evidence" value="ECO:0000266"/>
    <property type="project" value="RGD"/>
</dbReference>
<dbReference type="GO" id="GO:0021702">
    <property type="term" value="P:cerebellar Purkinje cell differentiation"/>
    <property type="evidence" value="ECO:0000266"/>
    <property type="project" value="RGD"/>
</dbReference>
<dbReference type="GO" id="GO:0003351">
    <property type="term" value="P:epithelial cilium movement involved in extracellular fluid movement"/>
    <property type="evidence" value="ECO:0000266"/>
    <property type="project" value="RGD"/>
</dbReference>
<dbReference type="GO" id="GO:0030317">
    <property type="term" value="P:flagellated sperm motility"/>
    <property type="evidence" value="ECO:0000266"/>
    <property type="project" value="RGD"/>
</dbReference>
<dbReference type="GO" id="GO:0002395">
    <property type="term" value="P:immune response in nasopharyngeal-associated lymphoid tissue"/>
    <property type="evidence" value="ECO:0000266"/>
    <property type="project" value="RGD"/>
</dbReference>
<dbReference type="GO" id="GO:0000226">
    <property type="term" value="P:microtubule cytoskeleton organization"/>
    <property type="evidence" value="ECO:0000266"/>
    <property type="project" value="RGD"/>
</dbReference>
<dbReference type="GO" id="GO:0120197">
    <property type="term" value="P:mucociliary clearance"/>
    <property type="evidence" value="ECO:0000266"/>
    <property type="project" value="RGD"/>
</dbReference>
<dbReference type="GO" id="GO:0036211">
    <property type="term" value="P:protein modification process"/>
    <property type="evidence" value="ECO:0007669"/>
    <property type="project" value="InterPro"/>
</dbReference>
<dbReference type="GO" id="GO:0120222">
    <property type="term" value="P:regulation of blastocyst development"/>
    <property type="evidence" value="ECO:0000266"/>
    <property type="project" value="RGD"/>
</dbReference>
<dbReference type="GO" id="GO:0007288">
    <property type="term" value="P:sperm axoneme assembly"/>
    <property type="evidence" value="ECO:0000266"/>
    <property type="project" value="RGD"/>
</dbReference>
<dbReference type="FunFam" id="3.30.470.20:FF:000033">
    <property type="entry name" value="Probable tubulin polyglutamylase TTLL1"/>
    <property type="match status" value="1"/>
</dbReference>
<dbReference type="Gene3D" id="3.30.470.20">
    <property type="entry name" value="ATP-grasp fold, B domain"/>
    <property type="match status" value="1"/>
</dbReference>
<dbReference type="InterPro" id="IPR004344">
    <property type="entry name" value="TTL/TTLL_fam"/>
</dbReference>
<dbReference type="PANTHER" id="PTHR12241:SF31">
    <property type="entry name" value="POLYGLUTAMYLASE COMPLEX SUBUNIT TTLL1"/>
    <property type="match status" value="1"/>
</dbReference>
<dbReference type="PANTHER" id="PTHR12241">
    <property type="entry name" value="TUBULIN POLYGLUTAMYLASE"/>
    <property type="match status" value="1"/>
</dbReference>
<dbReference type="Pfam" id="PF03133">
    <property type="entry name" value="TTL"/>
    <property type="match status" value="1"/>
</dbReference>
<dbReference type="SUPFAM" id="SSF56059">
    <property type="entry name" value="Glutathione synthetase ATP-binding domain-like"/>
    <property type="match status" value="1"/>
</dbReference>
<dbReference type="PROSITE" id="PS51221">
    <property type="entry name" value="TTL"/>
    <property type="match status" value="1"/>
</dbReference>
<gene>
    <name type="primary">Ttll1</name>
</gene>
<organism>
    <name type="scientific">Rattus norvegicus</name>
    <name type="common">Rat</name>
    <dbReference type="NCBI Taxonomy" id="10116"/>
    <lineage>
        <taxon>Eukaryota</taxon>
        <taxon>Metazoa</taxon>
        <taxon>Chordata</taxon>
        <taxon>Craniata</taxon>
        <taxon>Vertebrata</taxon>
        <taxon>Euteleostomi</taxon>
        <taxon>Mammalia</taxon>
        <taxon>Eutheria</taxon>
        <taxon>Euarchontoglires</taxon>
        <taxon>Glires</taxon>
        <taxon>Rodentia</taxon>
        <taxon>Myomorpha</taxon>
        <taxon>Muroidea</taxon>
        <taxon>Muridae</taxon>
        <taxon>Murinae</taxon>
        <taxon>Rattus</taxon>
    </lineage>
</organism>
<name>TTLL1_RAT</name>
<proteinExistence type="evidence at transcript level"/>
<sequence>MAGRVKWVTDIEKSVLINNFEKRGWVQVTENEDWNFYWMSVQTIRNVFSVETGYRLSDDQIVNHFPNHYELTRKDLMVKNIKRYRKELEKEGSPLAEKDENGKYLYLDFVPVTYMLPADYNLFVEEFRKSPSSTWIMKPCGKAQGKGIFLINKLSQIKKWSRDSKTSSFVSQSTKEAYVISLYINNPLLIGGRKFDLRLYVLVSTYRPLRCYMYKLGFCRFCTVKYTPSTSELDNMFVHLTNVAIQKHGEDYNHIHGGKWTVNNLRLYLESTRGREVTSKLFDEIHWIIVQSLKAVAPVMNNDKHCFECYGYDIIIDDKLKPWLIEVNASPSLTSSTANDRILKYNLINDTLNIAVPNGEIPDCKWNKSPPKEVLGNYEILYDEELAQGDGAERELRSRPGQPVGPRTGRSRDSGRNVLTTWK</sequence>